<organism>
    <name type="scientific">Cucumber mosaic virus (strain E5)</name>
    <name type="common">CMV</name>
    <dbReference type="NCBI Taxonomy" id="117111"/>
    <lineage>
        <taxon>Viruses</taxon>
        <taxon>Riboviria</taxon>
        <taxon>Orthornavirae</taxon>
        <taxon>Kitrinoviricota</taxon>
        <taxon>Alsuviricetes</taxon>
        <taxon>Martellivirales</taxon>
        <taxon>Bromoviridae</taxon>
        <taxon>Cucumovirus</taxon>
        <taxon>Cucumber mosaic virus</taxon>
    </lineage>
</organism>
<accession>O40981</accession>
<name>CAPSD_CMVE5</name>
<evidence type="ECO:0000250" key="1"/>
<evidence type="ECO:0000256" key="2">
    <source>
        <dbReference type="SAM" id="MobiDB-lite"/>
    </source>
</evidence>
<evidence type="ECO:0000305" key="3"/>
<reference key="1">
    <citation type="journal article" date="1996" name="Nihon Shokubutsu Byori Gakkaiho">
        <title>Six new subgroup I members of Japanese cucumber mosaic virus as determined by nucleotide sequence analysis on RNA3's cDNAs.</title>
        <authorList>
            <person name="Chaumpluk P."/>
            <person name="Sasaki Y."/>
            <person name="Nakajima N."/>
            <person name="Nagano H."/>
            <person name="Nakamura I."/>
            <person name="Suzuki K."/>
            <person name="Mise K."/>
            <person name="Inouye N."/>
            <person name="Okuno T."/>
            <person name="Furusawa I."/>
        </authorList>
    </citation>
    <scope>NUCLEOTIDE SEQUENCE [GENOMIC RNA]</scope>
</reference>
<organismHost>
    <name type="scientific">Cucumis sativus</name>
    <name type="common">Cucumber</name>
    <dbReference type="NCBI Taxonomy" id="3659"/>
</organismHost>
<organismHost>
    <name type="scientific">Solanum lycopersicum</name>
    <name type="common">Tomato</name>
    <name type="synonym">Lycopersicon esculentum</name>
    <dbReference type="NCBI Taxonomy" id="4081"/>
</organismHost>
<organismHost>
    <name type="scientific">Spinacia oleracea</name>
    <name type="common">Spinach</name>
    <dbReference type="NCBI Taxonomy" id="3562"/>
</organismHost>
<protein>
    <recommendedName>
        <fullName>Capsid protein</fullName>
        <shortName>CP</shortName>
    </recommendedName>
    <alternativeName>
        <fullName>Coat protein</fullName>
    </alternativeName>
</protein>
<comment type="function">
    <text evidence="1">Capsid protein. Probably binds RNA and plays a role in packaging (By similarity).</text>
</comment>
<comment type="subcellular location">
    <subcellularLocation>
        <location evidence="3">Virion</location>
    </subcellularLocation>
</comment>
<comment type="domain">
    <text evidence="1">The N-terminal arginine-rich stretch does not seem to be the major RNA-binding region that allows formation of an infectious ribonucleoprotein complex.</text>
</comment>
<comment type="similarity">
    <text evidence="3">Belongs to the cucumovirus capsid protein family.</text>
</comment>
<gene>
    <name type="ORF">ORF3b</name>
</gene>
<feature type="chain" id="PRO_0000083202" description="Capsid protein">
    <location>
        <begin position="1"/>
        <end position="218"/>
    </location>
</feature>
<feature type="region of interest" description="Disordered" evidence="2">
    <location>
        <begin position="1"/>
        <end position="28"/>
    </location>
</feature>
<feature type="compositionally biased region" description="Basic residues" evidence="2">
    <location>
        <begin position="11"/>
        <end position="21"/>
    </location>
</feature>
<feature type="modified residue" description="N-acetylmethionine; by host" evidence="1">
    <location>
        <position position="1"/>
    </location>
</feature>
<dbReference type="EMBL" id="D42080">
    <property type="protein sequence ID" value="BAA07677.1"/>
    <property type="molecule type" value="Genomic_RNA"/>
</dbReference>
<dbReference type="SMR" id="O40981"/>
<dbReference type="GO" id="GO:1990904">
    <property type="term" value="C:ribonucleoprotein complex"/>
    <property type="evidence" value="ECO:0007669"/>
    <property type="project" value="UniProtKB-KW"/>
</dbReference>
<dbReference type="GO" id="GO:0039617">
    <property type="term" value="C:T=3 icosahedral viral capsid"/>
    <property type="evidence" value="ECO:0007669"/>
    <property type="project" value="UniProtKB-KW"/>
</dbReference>
<dbReference type="GO" id="GO:0019013">
    <property type="term" value="C:viral nucleocapsid"/>
    <property type="evidence" value="ECO:0007669"/>
    <property type="project" value="UniProtKB-KW"/>
</dbReference>
<dbReference type="GO" id="GO:0003723">
    <property type="term" value="F:RNA binding"/>
    <property type="evidence" value="ECO:0007669"/>
    <property type="project" value="UniProtKB-KW"/>
</dbReference>
<dbReference type="GO" id="GO:0005198">
    <property type="term" value="F:structural molecule activity"/>
    <property type="evidence" value="ECO:0007669"/>
    <property type="project" value="InterPro"/>
</dbReference>
<dbReference type="Gene3D" id="2.60.120.530">
    <property type="entry name" value="Cucumovirus coat protein, subunit A"/>
    <property type="match status" value="1"/>
</dbReference>
<dbReference type="InterPro" id="IPR000247">
    <property type="entry name" value="Cucumovirus_coat"/>
</dbReference>
<dbReference type="InterPro" id="IPR037137">
    <property type="entry name" value="Cucumovirus_coat_Asu_sf"/>
</dbReference>
<dbReference type="Pfam" id="PF00760">
    <property type="entry name" value="Cucumo_coat"/>
    <property type="match status" value="1"/>
</dbReference>
<dbReference type="PRINTS" id="PR00222">
    <property type="entry name" value="CUCUMOCOAT"/>
</dbReference>
<dbReference type="SUPFAM" id="SSF88633">
    <property type="entry name" value="Positive stranded ssRNA viruses"/>
    <property type="match status" value="1"/>
</dbReference>
<sequence length="218" mass="24254">MDKSESTSVGRNRRRRPRRGSRSAPSSADANFRVLSQQLSRLNKTLAAGRPTINHPTFVGSERCRPGYTFTSITLKPPKIDRGSYYGKRLLLPDSVTEYDKKLVSRIQIRVNPLRKFDSTVWVTVRKVPASSDLSVAAISAMFADGASPVLVYQYAASGVQANNKLLYDLLAMRADIGDMRKYAVLVYSKDDALETDELVLHVDIEHQRIPTSGVLPV</sequence>
<keyword id="KW-0007">Acetylation</keyword>
<keyword id="KW-0167">Capsid protein</keyword>
<keyword id="KW-0687">Ribonucleoprotein</keyword>
<keyword id="KW-0694">RNA-binding</keyword>
<keyword id="KW-1142">T=3 icosahedral capsid protein</keyword>
<keyword id="KW-0543">Viral nucleoprotein</keyword>
<keyword id="KW-0946">Virion</keyword>
<proteinExistence type="inferred from homology"/>